<comment type="function">
    <text evidence="1">Catalyzes the interconversion of 2-phosphoglycerate and 3-phosphoglycerate.</text>
</comment>
<comment type="catalytic activity">
    <reaction evidence="1">
        <text>(2R)-2-phosphoglycerate = (2R)-3-phosphoglycerate</text>
        <dbReference type="Rhea" id="RHEA:15901"/>
        <dbReference type="ChEBI" id="CHEBI:58272"/>
        <dbReference type="ChEBI" id="CHEBI:58289"/>
        <dbReference type="EC" id="5.4.2.11"/>
    </reaction>
</comment>
<comment type="pathway">
    <text evidence="1">Carbohydrate degradation; glycolysis; pyruvate from D-glyceraldehyde 3-phosphate: step 3/5.</text>
</comment>
<comment type="subunit">
    <text evidence="1">Homodimer.</text>
</comment>
<comment type="similarity">
    <text evidence="1">Belongs to the phosphoglycerate mutase family. BPG-dependent PGAM subfamily.</text>
</comment>
<sequence length="249" mass="28512">MTRKLVLLRHGQSQWNSMNRFTGWVDIGLTEQGHQEATMAGHLMKKEGLEFDVAHTSLLKRAIHTLQDALKALDQDWLPIYKSWRLNERHYGALQGLDKIDTAAKHGEEQVNIWRRSYDIQPPPIDLDDPSHPMRDRRYAALDRKVLPVRESLKNTLERVLPYWNDAIAPQLNDNKTVLISAHGNSLRALYKYLNKESDEKILNVNIPTGIPLLFELSDTLQVVSYRYLGDPDAAQRAAEMVANQGKAK</sequence>
<protein>
    <recommendedName>
        <fullName evidence="1">2,3-bisphosphoglycerate-dependent phosphoglycerate mutase</fullName>
        <shortName evidence="1">BPG-dependent PGAM</shortName>
        <shortName evidence="1">PGAM</shortName>
        <shortName evidence="1">Phosphoglyceromutase</shortName>
        <shortName evidence="1">dPGM</shortName>
        <ecNumber evidence="1">5.4.2.11</ecNumber>
    </recommendedName>
</protein>
<name>GPMA_XYLFT</name>
<reference key="1">
    <citation type="journal article" date="2003" name="J. Bacteriol.">
        <title>Comparative analyses of the complete genome sequences of Pierce's disease and citrus variegated chlorosis strains of Xylella fastidiosa.</title>
        <authorList>
            <person name="Van Sluys M.A."/>
            <person name="de Oliveira M.C."/>
            <person name="Monteiro-Vitorello C.B."/>
            <person name="Miyaki C.Y."/>
            <person name="Furlan L.R."/>
            <person name="Camargo L.E.A."/>
            <person name="da Silva A.C.R."/>
            <person name="Moon D.H."/>
            <person name="Takita M.A."/>
            <person name="Lemos E.G.M."/>
            <person name="Machado M.A."/>
            <person name="Ferro M.I.T."/>
            <person name="da Silva F.R."/>
            <person name="Goldman M.H.S."/>
            <person name="Goldman G.H."/>
            <person name="Lemos M.V.F."/>
            <person name="El-Dorry H."/>
            <person name="Tsai S.M."/>
            <person name="Carrer H."/>
            <person name="Carraro D.M."/>
            <person name="de Oliveira R.C."/>
            <person name="Nunes L.R."/>
            <person name="Siqueira W.J."/>
            <person name="Coutinho L.L."/>
            <person name="Kimura E.T."/>
            <person name="Ferro E.S."/>
            <person name="Harakava R."/>
            <person name="Kuramae E.E."/>
            <person name="Marino C.L."/>
            <person name="Giglioti E."/>
            <person name="Abreu I.L."/>
            <person name="Alves L.M.C."/>
            <person name="do Amaral A.M."/>
            <person name="Baia G.S."/>
            <person name="Blanco S.R."/>
            <person name="Brito M.S."/>
            <person name="Cannavan F.S."/>
            <person name="Celestino A.V."/>
            <person name="da Cunha A.F."/>
            <person name="Fenille R.C."/>
            <person name="Ferro J.A."/>
            <person name="Formighieri E.F."/>
            <person name="Kishi L.T."/>
            <person name="Leoni S.G."/>
            <person name="Oliveira A.R."/>
            <person name="Rosa V.E. Jr."/>
            <person name="Sassaki F.T."/>
            <person name="Sena J.A.D."/>
            <person name="de Souza A.A."/>
            <person name="Truffi D."/>
            <person name="Tsukumo F."/>
            <person name="Yanai G.M."/>
            <person name="Zaros L.G."/>
            <person name="Civerolo E.L."/>
            <person name="Simpson A.J.G."/>
            <person name="Almeida N.F. Jr."/>
            <person name="Setubal J.C."/>
            <person name="Kitajima J.P."/>
        </authorList>
    </citation>
    <scope>NUCLEOTIDE SEQUENCE [LARGE SCALE GENOMIC DNA]</scope>
    <source>
        <strain>Temecula1 / ATCC 700964</strain>
    </source>
</reference>
<dbReference type="EC" id="5.4.2.11" evidence="1"/>
<dbReference type="EMBL" id="AE009442">
    <property type="protein sequence ID" value="AAO28763.1"/>
    <property type="molecule type" value="Genomic_DNA"/>
</dbReference>
<dbReference type="RefSeq" id="WP_004572908.1">
    <property type="nucleotide sequence ID" value="NC_004556.1"/>
</dbReference>
<dbReference type="SMR" id="Q87CZ1"/>
<dbReference type="GeneID" id="93904689"/>
<dbReference type="KEGG" id="xft:PD_0898"/>
<dbReference type="HOGENOM" id="CLU_033323_1_1_6"/>
<dbReference type="UniPathway" id="UPA00109">
    <property type="reaction ID" value="UER00186"/>
</dbReference>
<dbReference type="Proteomes" id="UP000002516">
    <property type="component" value="Chromosome"/>
</dbReference>
<dbReference type="GO" id="GO:0004619">
    <property type="term" value="F:phosphoglycerate mutase activity"/>
    <property type="evidence" value="ECO:0007669"/>
    <property type="project" value="UniProtKB-EC"/>
</dbReference>
<dbReference type="GO" id="GO:0006094">
    <property type="term" value="P:gluconeogenesis"/>
    <property type="evidence" value="ECO:0007669"/>
    <property type="project" value="UniProtKB-UniRule"/>
</dbReference>
<dbReference type="GO" id="GO:0006096">
    <property type="term" value="P:glycolytic process"/>
    <property type="evidence" value="ECO:0007669"/>
    <property type="project" value="UniProtKB-UniRule"/>
</dbReference>
<dbReference type="CDD" id="cd07067">
    <property type="entry name" value="HP_PGM_like"/>
    <property type="match status" value="1"/>
</dbReference>
<dbReference type="FunFam" id="3.40.50.1240:FF:000003">
    <property type="entry name" value="2,3-bisphosphoglycerate-dependent phosphoglycerate mutase"/>
    <property type="match status" value="1"/>
</dbReference>
<dbReference type="Gene3D" id="3.40.50.1240">
    <property type="entry name" value="Phosphoglycerate mutase-like"/>
    <property type="match status" value="1"/>
</dbReference>
<dbReference type="HAMAP" id="MF_01039">
    <property type="entry name" value="PGAM_GpmA"/>
    <property type="match status" value="1"/>
</dbReference>
<dbReference type="InterPro" id="IPR013078">
    <property type="entry name" value="His_Pase_superF_clade-1"/>
</dbReference>
<dbReference type="InterPro" id="IPR029033">
    <property type="entry name" value="His_PPase_superfam"/>
</dbReference>
<dbReference type="InterPro" id="IPR001345">
    <property type="entry name" value="PG/BPGM_mutase_AS"/>
</dbReference>
<dbReference type="InterPro" id="IPR005952">
    <property type="entry name" value="Phosphogly_mut1"/>
</dbReference>
<dbReference type="NCBIfam" id="TIGR01258">
    <property type="entry name" value="pgm_1"/>
    <property type="match status" value="1"/>
</dbReference>
<dbReference type="NCBIfam" id="NF010713">
    <property type="entry name" value="PRK14115.1"/>
    <property type="match status" value="1"/>
</dbReference>
<dbReference type="PANTHER" id="PTHR11931">
    <property type="entry name" value="PHOSPHOGLYCERATE MUTASE"/>
    <property type="match status" value="1"/>
</dbReference>
<dbReference type="Pfam" id="PF00300">
    <property type="entry name" value="His_Phos_1"/>
    <property type="match status" value="1"/>
</dbReference>
<dbReference type="PIRSF" id="PIRSF000709">
    <property type="entry name" value="6PFK_2-Ptase"/>
    <property type="match status" value="1"/>
</dbReference>
<dbReference type="SMART" id="SM00855">
    <property type="entry name" value="PGAM"/>
    <property type="match status" value="1"/>
</dbReference>
<dbReference type="SUPFAM" id="SSF53254">
    <property type="entry name" value="Phosphoglycerate mutase-like"/>
    <property type="match status" value="1"/>
</dbReference>
<dbReference type="PROSITE" id="PS00175">
    <property type="entry name" value="PG_MUTASE"/>
    <property type="match status" value="1"/>
</dbReference>
<organism>
    <name type="scientific">Xylella fastidiosa (strain Temecula1 / ATCC 700964)</name>
    <dbReference type="NCBI Taxonomy" id="183190"/>
    <lineage>
        <taxon>Bacteria</taxon>
        <taxon>Pseudomonadati</taxon>
        <taxon>Pseudomonadota</taxon>
        <taxon>Gammaproteobacteria</taxon>
        <taxon>Lysobacterales</taxon>
        <taxon>Lysobacteraceae</taxon>
        <taxon>Xylella</taxon>
    </lineage>
</organism>
<accession>Q87CZ1</accession>
<keyword id="KW-0312">Gluconeogenesis</keyword>
<keyword id="KW-0324">Glycolysis</keyword>
<keyword id="KW-0413">Isomerase</keyword>
<keyword id="KW-1185">Reference proteome</keyword>
<gene>
    <name evidence="1" type="primary">gpmA</name>
    <name type="ordered locus">PD_0898</name>
</gene>
<feature type="chain" id="PRO_0000179941" description="2,3-bisphosphoglycerate-dependent phosphoglycerate mutase">
    <location>
        <begin position="1"/>
        <end position="249"/>
    </location>
</feature>
<feature type="active site" description="Tele-phosphohistidine intermediate" evidence="1">
    <location>
        <position position="10"/>
    </location>
</feature>
<feature type="active site" description="Proton donor/acceptor" evidence="1">
    <location>
        <position position="88"/>
    </location>
</feature>
<feature type="binding site" evidence="1">
    <location>
        <begin position="9"/>
        <end position="16"/>
    </location>
    <ligand>
        <name>substrate</name>
    </ligand>
</feature>
<feature type="binding site" evidence="1">
    <location>
        <begin position="22"/>
        <end position="23"/>
    </location>
    <ligand>
        <name>substrate</name>
    </ligand>
</feature>
<feature type="binding site" evidence="1">
    <location>
        <position position="61"/>
    </location>
    <ligand>
        <name>substrate</name>
    </ligand>
</feature>
<feature type="binding site" evidence="1">
    <location>
        <begin position="88"/>
        <end position="91"/>
    </location>
    <ligand>
        <name>substrate</name>
    </ligand>
</feature>
<feature type="binding site" evidence="1">
    <location>
        <position position="99"/>
    </location>
    <ligand>
        <name>substrate</name>
    </ligand>
</feature>
<feature type="binding site" evidence="1">
    <location>
        <begin position="115"/>
        <end position="116"/>
    </location>
    <ligand>
        <name>substrate</name>
    </ligand>
</feature>
<feature type="binding site" evidence="1">
    <location>
        <begin position="184"/>
        <end position="185"/>
    </location>
    <ligand>
        <name>substrate</name>
    </ligand>
</feature>
<feature type="site" description="Transition state stabilizer" evidence="1">
    <location>
        <position position="183"/>
    </location>
</feature>
<proteinExistence type="inferred from homology"/>
<evidence type="ECO:0000255" key="1">
    <source>
        <dbReference type="HAMAP-Rule" id="MF_01039"/>
    </source>
</evidence>